<gene>
    <name type="primary">DNA-U4</name>
    <name type="synonym">C12</name>
</gene>
<evidence type="ECO:0000255" key="1"/>
<evidence type="ECO:0000305" key="2"/>
<feature type="chain" id="PRO_0000378548" description="Protein U4">
    <location>
        <begin position="1"/>
        <end position="108"/>
    </location>
</feature>
<feature type="transmembrane region" description="Helical" evidence="1">
    <location>
        <begin position="5"/>
        <end position="25"/>
    </location>
</feature>
<proteinExistence type="inferred from homology"/>
<keyword id="KW-0472">Membrane</keyword>
<keyword id="KW-1185">Reference proteome</keyword>
<keyword id="KW-0812">Transmembrane</keyword>
<keyword id="KW-1133">Transmembrane helix</keyword>
<accession>Q08JR8</accession>
<organismHost>
    <name type="scientific">Astragalus sinicus</name>
    <name type="common">Chinese milk vetch</name>
    <dbReference type="NCBI Taxonomy" id="47065"/>
</organismHost>
<organismHost>
    <name type="scientific">Glycine max</name>
    <name type="common">Soybean</name>
    <name type="synonym">Glycine hispida</name>
    <dbReference type="NCBI Taxonomy" id="3847"/>
</organismHost>
<organismHost>
    <name type="scientific">Phaseolus vulgaris</name>
    <name type="common">Kidney bean</name>
    <name type="synonym">French bean</name>
    <dbReference type="NCBI Taxonomy" id="3885"/>
</organismHost>
<organismHost>
    <name type="scientific">Pisum sativum</name>
    <name type="common">Garden pea</name>
    <name type="synonym">Lathyrus oleraceus</name>
    <dbReference type="NCBI Taxonomy" id="3888"/>
</organismHost>
<organismHost>
    <name type="scientific">Vicia faba</name>
    <name type="common">Broad bean</name>
    <name type="synonym">Faba vulgaris</name>
    <dbReference type="NCBI Taxonomy" id="3906"/>
</organismHost>
<organism>
    <name type="scientific">Milk vetch dwarf virus (isolate N)</name>
    <name type="common">MDV</name>
    <dbReference type="NCBI Taxonomy" id="291605"/>
    <lineage>
        <taxon>Viruses</taxon>
        <taxon>Monodnaviria</taxon>
        <taxon>Shotokuvirae</taxon>
        <taxon>Cressdnaviricota</taxon>
        <taxon>Arfiviricetes</taxon>
        <taxon>Mulpavirales</taxon>
        <taxon>Nanoviridae</taxon>
        <taxon>Nanovirus</taxon>
        <taxon>Milk vetch dwarf virus</taxon>
    </lineage>
</organism>
<name>U4_MDV1</name>
<reference key="1">
    <citation type="submission" date="2006-03" db="EMBL/GenBank/DDBJ databases">
        <title>Milk vetch dwarf virus genome components DNA-U4.</title>
        <authorList>
            <person name="Sano Y."/>
        </authorList>
    </citation>
    <scope>NUCLEOTIDE SEQUENCE [GENOMIC DNA]</scope>
</reference>
<protein>
    <recommendedName>
        <fullName>Protein U4</fullName>
    </recommendedName>
</protein>
<dbReference type="EMBL" id="AB255373">
    <property type="protein sequence ID" value="BAF33869.1"/>
    <property type="molecule type" value="Genomic_DNA"/>
</dbReference>
<dbReference type="RefSeq" id="YP_009010940.1">
    <property type="nucleotide sequence ID" value="NC_023626.1"/>
</dbReference>
<dbReference type="KEGG" id="vg:18501835"/>
<dbReference type="Proteomes" id="UP001507899">
    <property type="component" value="Genome"/>
</dbReference>
<dbReference type="GO" id="GO:0016020">
    <property type="term" value="C:membrane"/>
    <property type="evidence" value="ECO:0007669"/>
    <property type="project" value="UniProtKB-SubCell"/>
</dbReference>
<sequence length="108" mass="12652">MEPRFLLFSLLFVVFLQPALVFNMVLGYILGYLIKKNYARLKVMFLTNTFEQPEEDDIHVSDEKNPFEGIDPDVSKHLKTLGLDTSLDGEDLEYLQRFWESMSNTKKK</sequence>
<comment type="subcellular location">
    <subcellularLocation>
        <location evidence="2">Membrane</location>
        <topology evidence="2">Single-pass membrane protein</topology>
    </subcellularLocation>
</comment>
<comment type="similarity">
    <text evidence="2">Belongs to the nanovirus U4 protein family.</text>
</comment>
<comment type="caution">
    <text evidence="2">It is uncertain whether Met-1 or Met-24 is the initiator.</text>
</comment>